<keyword id="KW-0028">Amino-acid biosynthesis</keyword>
<keyword id="KW-0963">Cytoplasm</keyword>
<keyword id="KW-0368">Histidine biosynthesis</keyword>
<keyword id="KW-0456">Lyase</keyword>
<keyword id="KW-1185">Reference proteome</keyword>
<dbReference type="EC" id="4.2.1.19" evidence="1"/>
<dbReference type="EMBL" id="U19362">
    <property type="protein sequence ID" value="AAA87415.1"/>
    <property type="molecule type" value="Genomic_DNA"/>
</dbReference>
<dbReference type="EMBL" id="AE000666">
    <property type="protein sequence ID" value="AAB85942.1"/>
    <property type="status" value="ALT_INIT"/>
    <property type="molecule type" value="Genomic_DNA"/>
</dbReference>
<dbReference type="PIR" id="D69062">
    <property type="entry name" value="D69062"/>
</dbReference>
<dbReference type="SMR" id="Q50504"/>
<dbReference type="FunCoup" id="Q50504">
    <property type="interactions" value="96"/>
</dbReference>
<dbReference type="STRING" id="187420.MTH_1467"/>
<dbReference type="PaxDb" id="187420-MTH_1467"/>
<dbReference type="EnsemblBacteria" id="AAB85942">
    <property type="protein sequence ID" value="AAB85942"/>
    <property type="gene ID" value="MTH_1467"/>
</dbReference>
<dbReference type="KEGG" id="mth:MTH_1467"/>
<dbReference type="PATRIC" id="fig|187420.15.peg.1429"/>
<dbReference type="HOGENOM" id="CLU_044308_3_0_2"/>
<dbReference type="InParanoid" id="Q50504"/>
<dbReference type="UniPathway" id="UPA00031">
    <property type="reaction ID" value="UER00011"/>
</dbReference>
<dbReference type="Proteomes" id="UP000005223">
    <property type="component" value="Chromosome"/>
</dbReference>
<dbReference type="GO" id="GO:0005737">
    <property type="term" value="C:cytoplasm"/>
    <property type="evidence" value="ECO:0007669"/>
    <property type="project" value="UniProtKB-SubCell"/>
</dbReference>
<dbReference type="GO" id="GO:0004424">
    <property type="term" value="F:imidazoleglycerol-phosphate dehydratase activity"/>
    <property type="evidence" value="ECO:0007669"/>
    <property type="project" value="UniProtKB-UniRule"/>
</dbReference>
<dbReference type="GO" id="GO:0000105">
    <property type="term" value="P:L-histidine biosynthetic process"/>
    <property type="evidence" value="ECO:0007669"/>
    <property type="project" value="UniProtKB-UniRule"/>
</dbReference>
<dbReference type="CDD" id="cd07914">
    <property type="entry name" value="IGPD"/>
    <property type="match status" value="1"/>
</dbReference>
<dbReference type="FunFam" id="3.30.230.40:FF:000001">
    <property type="entry name" value="Imidazoleglycerol-phosphate dehydratase HisB"/>
    <property type="match status" value="1"/>
</dbReference>
<dbReference type="FunFam" id="3.30.230.40:FF:000003">
    <property type="entry name" value="Imidazoleglycerol-phosphate dehydratase HisB"/>
    <property type="match status" value="1"/>
</dbReference>
<dbReference type="Gene3D" id="3.30.230.40">
    <property type="entry name" value="Imidazole glycerol phosphate dehydratase, domain 1"/>
    <property type="match status" value="2"/>
</dbReference>
<dbReference type="HAMAP" id="MF_00076">
    <property type="entry name" value="HisB"/>
    <property type="match status" value="1"/>
</dbReference>
<dbReference type="InterPro" id="IPR038494">
    <property type="entry name" value="IGPD_sf"/>
</dbReference>
<dbReference type="InterPro" id="IPR000807">
    <property type="entry name" value="ImidazoleglycerolP_deHydtase"/>
</dbReference>
<dbReference type="InterPro" id="IPR020565">
    <property type="entry name" value="ImidazoleglycerP_deHydtase_CS"/>
</dbReference>
<dbReference type="InterPro" id="IPR020568">
    <property type="entry name" value="Ribosomal_Su5_D2-typ_SF"/>
</dbReference>
<dbReference type="NCBIfam" id="NF002111">
    <property type="entry name" value="PRK00951.2-1"/>
    <property type="match status" value="1"/>
</dbReference>
<dbReference type="NCBIfam" id="NF002114">
    <property type="entry name" value="PRK00951.2-4"/>
    <property type="match status" value="1"/>
</dbReference>
<dbReference type="PANTHER" id="PTHR23133:SF2">
    <property type="entry name" value="IMIDAZOLEGLYCEROL-PHOSPHATE DEHYDRATASE"/>
    <property type="match status" value="1"/>
</dbReference>
<dbReference type="PANTHER" id="PTHR23133">
    <property type="entry name" value="IMIDAZOLEGLYCEROL-PHOSPHATE DEHYDRATASE HIS7"/>
    <property type="match status" value="1"/>
</dbReference>
<dbReference type="Pfam" id="PF00475">
    <property type="entry name" value="IGPD"/>
    <property type="match status" value="1"/>
</dbReference>
<dbReference type="SUPFAM" id="SSF54211">
    <property type="entry name" value="Ribosomal protein S5 domain 2-like"/>
    <property type="match status" value="2"/>
</dbReference>
<dbReference type="PROSITE" id="PS00954">
    <property type="entry name" value="IGP_DEHYDRATASE_1"/>
    <property type="match status" value="1"/>
</dbReference>
<dbReference type="PROSITE" id="PS00955">
    <property type="entry name" value="IGP_DEHYDRATASE_2"/>
    <property type="match status" value="1"/>
</dbReference>
<reference key="1">
    <citation type="journal article" date="1995" name="J. Bacteriol.">
        <title>Organization and growth phase-dependent transcription of methane genes in two regions of the Methanobacterium thermoautotrophicum genome.</title>
        <authorList>
            <person name="Noelling J."/>
            <person name="Pihl T.D."/>
            <person name="Vriesema A."/>
            <person name="Reeve J.N."/>
        </authorList>
    </citation>
    <scope>NUCLEOTIDE SEQUENCE [GENOMIC DNA]</scope>
    <source>
        <strain>ATCC 29096 / DSM 1053 / JCM 10044 / NBRC 100330 / Delta H</strain>
    </source>
</reference>
<reference key="2">
    <citation type="journal article" date="1997" name="J. Bacteriol.">
        <title>Complete genome sequence of Methanobacterium thermoautotrophicum deltaH: functional analysis and comparative genomics.</title>
        <authorList>
            <person name="Smith D.R."/>
            <person name="Doucette-Stamm L.A."/>
            <person name="Deloughery C."/>
            <person name="Lee H.-M."/>
            <person name="Dubois J."/>
            <person name="Aldredge T."/>
            <person name="Bashirzadeh R."/>
            <person name="Blakely D."/>
            <person name="Cook R."/>
            <person name="Gilbert K."/>
            <person name="Harrison D."/>
            <person name="Hoang L."/>
            <person name="Keagle P."/>
            <person name="Lumm W."/>
            <person name="Pothier B."/>
            <person name="Qiu D."/>
            <person name="Spadafora R."/>
            <person name="Vicare R."/>
            <person name="Wang Y."/>
            <person name="Wierzbowski J."/>
            <person name="Gibson R."/>
            <person name="Jiwani N."/>
            <person name="Caruso A."/>
            <person name="Bush D."/>
            <person name="Safer H."/>
            <person name="Patwell D."/>
            <person name="Prabhakar S."/>
            <person name="McDougall S."/>
            <person name="Shimer G."/>
            <person name="Goyal A."/>
            <person name="Pietrovski S."/>
            <person name="Church G.M."/>
            <person name="Daniels C.J."/>
            <person name="Mao J.-I."/>
            <person name="Rice P."/>
            <person name="Noelling J."/>
            <person name="Reeve J.N."/>
        </authorList>
    </citation>
    <scope>NUCLEOTIDE SEQUENCE [LARGE SCALE GENOMIC DNA]</scope>
    <source>
        <strain>ATCC 29096 / DSM 1053 / JCM 10044 / NBRC 100330 / Delta H</strain>
    </source>
</reference>
<feature type="chain" id="PRO_0000158193" description="Imidazoleglycerol-phosphate dehydratase">
    <location>
        <begin position="1"/>
        <end position="194"/>
    </location>
</feature>
<comment type="catalytic activity">
    <reaction evidence="1">
        <text>D-erythro-1-(imidazol-4-yl)glycerol 3-phosphate = 3-(imidazol-4-yl)-2-oxopropyl phosphate + H2O</text>
        <dbReference type="Rhea" id="RHEA:11040"/>
        <dbReference type="ChEBI" id="CHEBI:15377"/>
        <dbReference type="ChEBI" id="CHEBI:57766"/>
        <dbReference type="ChEBI" id="CHEBI:58278"/>
        <dbReference type="EC" id="4.2.1.19"/>
    </reaction>
</comment>
<comment type="pathway">
    <text evidence="1">Amino-acid biosynthesis; L-histidine biosynthesis; L-histidine from 5-phospho-alpha-D-ribose 1-diphosphate: step 6/9.</text>
</comment>
<comment type="subcellular location">
    <subcellularLocation>
        <location evidence="1">Cytoplasm</location>
    </subcellularLocation>
</comment>
<comment type="similarity">
    <text evidence="1">Belongs to the imidazoleglycerol-phosphate dehydratase family.</text>
</comment>
<comment type="sequence caution" evidence="2">
    <conflict type="erroneous initiation">
        <sequence resource="EMBL-CDS" id="AAB85942"/>
    </conflict>
</comment>
<sequence length="194" mass="21121">MITMRRSMKTRETLETHVKVDLEIDGSGKSSVNTGLGFLDHMLESVARHGLLDLEVEARGDLEVDDHHTVEDVALTLGEALREALGDKSGIRRMAHAMVPMDDALATVALDLSGRPYTVLELEFDDAVIGDVKSQNIGHFIESLAVSAAMNIHASVRGRNDHHKAEALFKALALAIRDAVRVEHGEIPSTKGKL</sequence>
<gene>
    <name evidence="1" type="primary">hisB</name>
    <name type="ordered locus">MTH_1467</name>
</gene>
<organism>
    <name type="scientific">Methanothermobacter thermautotrophicus (strain ATCC 29096 / DSM 1053 / JCM 10044 / NBRC 100330 / Delta H)</name>
    <name type="common">Methanobacterium thermoautotrophicum</name>
    <dbReference type="NCBI Taxonomy" id="187420"/>
    <lineage>
        <taxon>Archaea</taxon>
        <taxon>Methanobacteriati</taxon>
        <taxon>Methanobacteriota</taxon>
        <taxon>Methanomada group</taxon>
        <taxon>Methanobacteria</taxon>
        <taxon>Methanobacteriales</taxon>
        <taxon>Methanobacteriaceae</taxon>
        <taxon>Methanothermobacter</taxon>
    </lineage>
</organism>
<evidence type="ECO:0000255" key="1">
    <source>
        <dbReference type="HAMAP-Rule" id="MF_00076"/>
    </source>
</evidence>
<evidence type="ECO:0000305" key="2"/>
<accession>Q50504</accession>
<accession>O27512</accession>
<protein>
    <recommendedName>
        <fullName evidence="1">Imidazoleglycerol-phosphate dehydratase</fullName>
        <shortName evidence="1">IGPD</shortName>
        <ecNumber evidence="1">4.2.1.19</ecNumber>
    </recommendedName>
</protein>
<name>HIS7_METTH</name>
<proteinExistence type="inferred from homology"/>